<dbReference type="EMBL" id="CP000609">
    <property type="protein sequence ID" value="ABO35961.1"/>
    <property type="molecule type" value="Genomic_DNA"/>
</dbReference>
<dbReference type="RefSeq" id="WP_011869408.1">
    <property type="nucleotide sequence ID" value="NC_009135.1"/>
</dbReference>
<dbReference type="SMR" id="A4G0H7"/>
<dbReference type="STRING" id="402880.MmarC5_1664"/>
<dbReference type="GeneID" id="4929310"/>
<dbReference type="KEGG" id="mmq:MmarC5_1664"/>
<dbReference type="eggNOG" id="arCOG01008">
    <property type="taxonomic scope" value="Archaea"/>
</dbReference>
<dbReference type="HOGENOM" id="CLU_113319_1_2_2"/>
<dbReference type="OrthoDB" id="25654at2157"/>
<dbReference type="Proteomes" id="UP000000253">
    <property type="component" value="Chromosome"/>
</dbReference>
<dbReference type="GO" id="GO:0003677">
    <property type="term" value="F:DNA binding"/>
    <property type="evidence" value="ECO:0007669"/>
    <property type="project" value="UniProtKB-KW"/>
</dbReference>
<dbReference type="GO" id="GO:0003700">
    <property type="term" value="F:DNA-binding transcription factor activity"/>
    <property type="evidence" value="ECO:0007669"/>
    <property type="project" value="UniProtKB-UniRule"/>
</dbReference>
<dbReference type="GO" id="GO:0016151">
    <property type="term" value="F:nickel cation binding"/>
    <property type="evidence" value="ECO:0007669"/>
    <property type="project" value="UniProtKB-UniRule"/>
</dbReference>
<dbReference type="GO" id="GO:0010045">
    <property type="term" value="P:response to nickel cation"/>
    <property type="evidence" value="ECO:0007669"/>
    <property type="project" value="InterPro"/>
</dbReference>
<dbReference type="CDD" id="cd22231">
    <property type="entry name" value="RHH_NikR_HicB-like"/>
    <property type="match status" value="1"/>
</dbReference>
<dbReference type="Gene3D" id="3.30.70.1150">
    <property type="entry name" value="ACT-like. Chain A, domain 2"/>
    <property type="match status" value="1"/>
</dbReference>
<dbReference type="Gene3D" id="1.10.1220.10">
    <property type="entry name" value="Met repressor-like"/>
    <property type="match status" value="1"/>
</dbReference>
<dbReference type="HAMAP" id="MF_00476">
    <property type="entry name" value="NikR"/>
    <property type="match status" value="1"/>
</dbReference>
<dbReference type="InterPro" id="IPR027271">
    <property type="entry name" value="Acetolactate_synth/TF_NikR_C"/>
</dbReference>
<dbReference type="InterPro" id="IPR045865">
    <property type="entry name" value="ACT-like_dom_sf"/>
</dbReference>
<dbReference type="InterPro" id="IPR013321">
    <property type="entry name" value="Arc_rbn_hlx_hlx"/>
</dbReference>
<dbReference type="InterPro" id="IPR002145">
    <property type="entry name" value="CopG"/>
</dbReference>
<dbReference type="InterPro" id="IPR050192">
    <property type="entry name" value="CopG/NikR_regulator"/>
</dbReference>
<dbReference type="InterPro" id="IPR022988">
    <property type="entry name" value="Ni_resp_reg_NikR"/>
</dbReference>
<dbReference type="InterPro" id="IPR010985">
    <property type="entry name" value="Ribbon_hlx_hlx"/>
</dbReference>
<dbReference type="InterPro" id="IPR014864">
    <property type="entry name" value="TF_NikR_Ni-bd_C"/>
</dbReference>
<dbReference type="NCBIfam" id="NF001884">
    <property type="entry name" value="PRK00630.1"/>
    <property type="match status" value="1"/>
</dbReference>
<dbReference type="NCBIfam" id="NF002169">
    <property type="entry name" value="PRK01002.1"/>
    <property type="match status" value="1"/>
</dbReference>
<dbReference type="NCBIfam" id="NF002815">
    <property type="entry name" value="PRK02967.1"/>
    <property type="match status" value="1"/>
</dbReference>
<dbReference type="NCBIfam" id="NF003381">
    <property type="entry name" value="PRK04460.1"/>
    <property type="match status" value="1"/>
</dbReference>
<dbReference type="PANTHER" id="PTHR34719">
    <property type="entry name" value="NICKEL-RESPONSIVE REGULATOR"/>
    <property type="match status" value="1"/>
</dbReference>
<dbReference type="PANTHER" id="PTHR34719:SF2">
    <property type="entry name" value="NICKEL-RESPONSIVE REGULATOR"/>
    <property type="match status" value="1"/>
</dbReference>
<dbReference type="Pfam" id="PF08753">
    <property type="entry name" value="NikR_C"/>
    <property type="match status" value="1"/>
</dbReference>
<dbReference type="Pfam" id="PF01402">
    <property type="entry name" value="RHH_1"/>
    <property type="match status" value="1"/>
</dbReference>
<dbReference type="SUPFAM" id="SSF55021">
    <property type="entry name" value="ACT-like"/>
    <property type="match status" value="1"/>
</dbReference>
<dbReference type="SUPFAM" id="SSF47598">
    <property type="entry name" value="Ribbon-helix-helix"/>
    <property type="match status" value="1"/>
</dbReference>
<sequence length="141" mass="16075">MVDMDRISISLPTNLLAEFDEIIEERGYASRSEAIRDSIRDYLIKHKWIHSLEGDRAGTISIIYDHHSTDVMEKLTNIQHDYEKLIVATIHMHLDHDHCMEVVLVKGDASEIKELTDKLTSQKGVKQVKLTVMVPGGNIPQ</sequence>
<gene>
    <name type="ordered locus">MmarC5_1664</name>
</gene>
<proteinExistence type="inferred from homology"/>
<keyword id="KW-0238">DNA-binding</keyword>
<keyword id="KW-0479">Metal-binding</keyword>
<keyword id="KW-0533">Nickel</keyword>
<keyword id="KW-0804">Transcription</keyword>
<keyword id="KW-0805">Transcription regulation</keyword>
<accession>A4G0H7</accession>
<organism>
    <name type="scientific">Methanococcus maripaludis (strain C5 / ATCC BAA-1333)</name>
    <dbReference type="NCBI Taxonomy" id="402880"/>
    <lineage>
        <taxon>Archaea</taxon>
        <taxon>Methanobacteriati</taxon>
        <taxon>Methanobacteriota</taxon>
        <taxon>Methanomada group</taxon>
        <taxon>Methanococci</taxon>
        <taxon>Methanococcales</taxon>
        <taxon>Methanococcaceae</taxon>
        <taxon>Methanococcus</taxon>
    </lineage>
</organism>
<protein>
    <recommendedName>
        <fullName evidence="1">Putative nickel-responsive regulator</fullName>
    </recommendedName>
</protein>
<name>NIKR_METM5</name>
<evidence type="ECO:0000255" key="1">
    <source>
        <dbReference type="HAMAP-Rule" id="MF_00476"/>
    </source>
</evidence>
<reference key="1">
    <citation type="submission" date="2007-03" db="EMBL/GenBank/DDBJ databases">
        <title>Complete sequence of chromosome of Methanococcus maripaludis C5.</title>
        <authorList>
            <consortium name="US DOE Joint Genome Institute"/>
            <person name="Copeland A."/>
            <person name="Lucas S."/>
            <person name="Lapidus A."/>
            <person name="Barry K."/>
            <person name="Glavina del Rio T."/>
            <person name="Dalin E."/>
            <person name="Tice H."/>
            <person name="Pitluck S."/>
            <person name="Chertkov O."/>
            <person name="Brettin T."/>
            <person name="Bruce D."/>
            <person name="Han C."/>
            <person name="Detter J.C."/>
            <person name="Schmutz J."/>
            <person name="Larimer F."/>
            <person name="Land M."/>
            <person name="Hauser L."/>
            <person name="Kyrpides N."/>
            <person name="Mikhailova N."/>
            <person name="Sieprawska-Lupa M."/>
            <person name="Whitman W.B."/>
            <person name="Richardson P."/>
        </authorList>
    </citation>
    <scope>NUCLEOTIDE SEQUENCE [LARGE SCALE GENOMIC DNA]</scope>
    <source>
        <strain>C5 / ATCC BAA-1333</strain>
    </source>
</reference>
<comment type="function">
    <text evidence="1">Transcriptional regulator.</text>
</comment>
<comment type="cofactor">
    <cofactor evidence="1">
        <name>Ni(2+)</name>
        <dbReference type="ChEBI" id="CHEBI:49786"/>
    </cofactor>
    <text evidence="1">Binds 1 nickel ion per subunit.</text>
</comment>
<comment type="similarity">
    <text evidence="1">Belongs to the transcriptional regulatory CopG/NikR family.</text>
</comment>
<feature type="chain" id="PRO_1000014073" description="Putative nickel-responsive regulator">
    <location>
        <begin position="1"/>
        <end position="141"/>
    </location>
</feature>
<feature type="binding site" evidence="1">
    <location>
        <position position="80"/>
    </location>
    <ligand>
        <name>Ni(2+)</name>
        <dbReference type="ChEBI" id="CHEBI:49786"/>
    </ligand>
</feature>
<feature type="binding site" evidence="1">
    <location>
        <position position="91"/>
    </location>
    <ligand>
        <name>Ni(2+)</name>
        <dbReference type="ChEBI" id="CHEBI:49786"/>
    </ligand>
</feature>
<feature type="binding site" evidence="1">
    <location>
        <position position="93"/>
    </location>
    <ligand>
        <name>Ni(2+)</name>
        <dbReference type="ChEBI" id="CHEBI:49786"/>
    </ligand>
</feature>
<feature type="binding site" evidence="1">
    <location>
        <position position="99"/>
    </location>
    <ligand>
        <name>Ni(2+)</name>
        <dbReference type="ChEBI" id="CHEBI:49786"/>
    </ligand>
</feature>